<organism>
    <name type="scientific">Cryptococcus neoformans var. neoformans serotype D (strain B-3501A)</name>
    <name type="common">Filobasidiella neoformans</name>
    <dbReference type="NCBI Taxonomy" id="283643"/>
    <lineage>
        <taxon>Eukaryota</taxon>
        <taxon>Fungi</taxon>
        <taxon>Dikarya</taxon>
        <taxon>Basidiomycota</taxon>
        <taxon>Agaricomycotina</taxon>
        <taxon>Tremellomycetes</taxon>
        <taxon>Tremellales</taxon>
        <taxon>Cryptococcaceae</taxon>
        <taxon>Cryptococcus</taxon>
        <taxon>Cryptococcus neoformans species complex</taxon>
    </lineage>
</organism>
<accession>P0CM07</accession>
<accession>Q55WM0</accession>
<accession>Q5KJM6</accession>
<feature type="chain" id="PRO_0000410004" description="Cofilin">
    <location>
        <begin position="1"/>
        <end position="138"/>
    </location>
</feature>
<feature type="domain" description="ADF-H" evidence="2">
    <location>
        <begin position="2"/>
        <end position="136"/>
    </location>
</feature>
<gene>
    <name type="primary">COF1</name>
    <name type="ordered locus">CNBC1190</name>
</gene>
<name>COFI_CRYNB</name>
<sequence>MSSGVQPTQECLEKFQELKTGKKLTYVIYGLSEDKRSIVVLKASEDKDFDSFVAELPEKDCRWAVYDFEFTLPGGEGVRNKLCFIVWSPDDASVKNKMIFASSKEAIRRRLDGIHTEIQATDFSEITKDALFEKATRK</sequence>
<reference key="1">
    <citation type="journal article" date="2005" name="Science">
        <title>The genome of the basidiomycetous yeast and human pathogen Cryptococcus neoformans.</title>
        <authorList>
            <person name="Loftus B.J."/>
            <person name="Fung E."/>
            <person name="Roncaglia P."/>
            <person name="Rowley D."/>
            <person name="Amedeo P."/>
            <person name="Bruno D."/>
            <person name="Vamathevan J."/>
            <person name="Miranda M."/>
            <person name="Anderson I.J."/>
            <person name="Fraser J.A."/>
            <person name="Allen J.E."/>
            <person name="Bosdet I.E."/>
            <person name="Brent M.R."/>
            <person name="Chiu R."/>
            <person name="Doering T.L."/>
            <person name="Donlin M.J."/>
            <person name="D'Souza C.A."/>
            <person name="Fox D.S."/>
            <person name="Grinberg V."/>
            <person name="Fu J."/>
            <person name="Fukushima M."/>
            <person name="Haas B.J."/>
            <person name="Huang J.C."/>
            <person name="Janbon G."/>
            <person name="Jones S.J.M."/>
            <person name="Koo H.L."/>
            <person name="Krzywinski M.I."/>
            <person name="Kwon-Chung K.J."/>
            <person name="Lengeler K.B."/>
            <person name="Maiti R."/>
            <person name="Marra M.A."/>
            <person name="Marra R.E."/>
            <person name="Mathewson C.A."/>
            <person name="Mitchell T.G."/>
            <person name="Pertea M."/>
            <person name="Riggs F.R."/>
            <person name="Salzberg S.L."/>
            <person name="Schein J.E."/>
            <person name="Shvartsbeyn A."/>
            <person name="Shin H."/>
            <person name="Shumway M."/>
            <person name="Specht C.A."/>
            <person name="Suh B.B."/>
            <person name="Tenney A."/>
            <person name="Utterback T.R."/>
            <person name="Wickes B.L."/>
            <person name="Wortman J.R."/>
            <person name="Wye N.H."/>
            <person name="Kronstad J.W."/>
            <person name="Lodge J.K."/>
            <person name="Heitman J."/>
            <person name="Davis R.W."/>
            <person name="Fraser C.M."/>
            <person name="Hyman R.W."/>
        </authorList>
    </citation>
    <scope>NUCLEOTIDE SEQUENCE [LARGE SCALE GENOMIC DNA]</scope>
    <source>
        <strain>B-3501A</strain>
    </source>
</reference>
<evidence type="ECO:0000250" key="1"/>
<evidence type="ECO:0000255" key="2">
    <source>
        <dbReference type="PROSITE-ProRule" id="PRU00599"/>
    </source>
</evidence>
<evidence type="ECO:0000305" key="3"/>
<dbReference type="EMBL" id="AAEY01000013">
    <property type="protein sequence ID" value="EAL21979.1"/>
    <property type="molecule type" value="Genomic_DNA"/>
</dbReference>
<dbReference type="RefSeq" id="XP_776626.1">
    <property type="nucleotide sequence ID" value="XM_771533.1"/>
</dbReference>
<dbReference type="SMR" id="P0CM07"/>
<dbReference type="EnsemblFungi" id="AAW42673">
    <property type="protein sequence ID" value="AAW42673"/>
    <property type="gene ID" value="CNC05990"/>
</dbReference>
<dbReference type="GeneID" id="4934784"/>
<dbReference type="KEGG" id="cnb:CNBC1190"/>
<dbReference type="VEuPathDB" id="FungiDB:CNBC1190"/>
<dbReference type="HOGENOM" id="CLU_094004_3_2_1"/>
<dbReference type="OrthoDB" id="3188at5206"/>
<dbReference type="GO" id="GO:0015629">
    <property type="term" value="C:actin cytoskeleton"/>
    <property type="evidence" value="ECO:0007669"/>
    <property type="project" value="InterPro"/>
</dbReference>
<dbReference type="GO" id="GO:0005737">
    <property type="term" value="C:cytoplasm"/>
    <property type="evidence" value="ECO:0007669"/>
    <property type="project" value="UniProtKB-SubCell"/>
</dbReference>
<dbReference type="GO" id="GO:0016363">
    <property type="term" value="C:nuclear matrix"/>
    <property type="evidence" value="ECO:0007669"/>
    <property type="project" value="UniProtKB-SubCell"/>
</dbReference>
<dbReference type="GO" id="GO:0003779">
    <property type="term" value="F:actin binding"/>
    <property type="evidence" value="ECO:0007669"/>
    <property type="project" value="UniProtKB-KW"/>
</dbReference>
<dbReference type="GO" id="GO:0030042">
    <property type="term" value="P:actin filament depolymerization"/>
    <property type="evidence" value="ECO:0007669"/>
    <property type="project" value="InterPro"/>
</dbReference>
<dbReference type="GO" id="GO:0051301">
    <property type="term" value="P:cell division"/>
    <property type="evidence" value="ECO:0007669"/>
    <property type="project" value="UniProtKB-KW"/>
</dbReference>
<dbReference type="CDD" id="cd11286">
    <property type="entry name" value="ADF_cofilin_like"/>
    <property type="match status" value="1"/>
</dbReference>
<dbReference type="Gene3D" id="3.40.20.10">
    <property type="entry name" value="Severin"/>
    <property type="match status" value="1"/>
</dbReference>
<dbReference type="InterPro" id="IPR002108">
    <property type="entry name" value="ADF-H"/>
</dbReference>
<dbReference type="InterPro" id="IPR029006">
    <property type="entry name" value="ADF-H/Gelsolin-like_dom_sf"/>
</dbReference>
<dbReference type="InterPro" id="IPR017904">
    <property type="entry name" value="ADF/Cofilin"/>
</dbReference>
<dbReference type="PANTHER" id="PTHR11913">
    <property type="entry name" value="COFILIN-RELATED"/>
    <property type="match status" value="1"/>
</dbReference>
<dbReference type="Pfam" id="PF00241">
    <property type="entry name" value="Cofilin_ADF"/>
    <property type="match status" value="1"/>
</dbReference>
<dbReference type="SMART" id="SM00102">
    <property type="entry name" value="ADF"/>
    <property type="match status" value="1"/>
</dbReference>
<dbReference type="SUPFAM" id="SSF55753">
    <property type="entry name" value="Actin depolymerizing proteins"/>
    <property type="match status" value="1"/>
</dbReference>
<dbReference type="PROSITE" id="PS51263">
    <property type="entry name" value="ADF_H"/>
    <property type="match status" value="1"/>
</dbReference>
<proteinExistence type="inferred from homology"/>
<comment type="function">
    <text evidence="1">Controls reversibly actin polymerization and depolymerization in a pH-sensitive manner. It has the ability to bind G- and F-actin in a 1:1 ratio of cofilin to actin. Binding to F-actin is regulated by tropomyosin. It is the major component of intranuclear and cytoplasmic actin rods. Required for accumulation of actin at the cell division site via depolymerizing actin at the cell ends. In association with myosin II has a role in the assembly of the contractile ring via severing actin filaments. Involved in the maintenance of the contractile ring once formed. In association with profilin and capping protein, has a role in the mitotic reorganization of the actin cytoskeleton (By similarity).</text>
</comment>
<comment type="subcellular location">
    <subcellularLocation>
        <location evidence="1">Cytoplasm</location>
    </subcellularLocation>
    <subcellularLocation>
        <location evidence="1">Cytoplasm</location>
        <location evidence="1">Cytoskeleton</location>
    </subcellularLocation>
    <subcellularLocation>
        <location evidence="1">Nucleus matrix</location>
    </subcellularLocation>
    <text evidence="1">Throughout the cytoplasm (but not on the cytoplasmic cables) and major component of the cortical actin cytoskeleton.</text>
</comment>
<comment type="similarity">
    <text evidence="3">Belongs to the actin-binding proteins ADF family.</text>
</comment>
<protein>
    <recommendedName>
        <fullName>Cofilin</fullName>
    </recommendedName>
    <alternativeName>
        <fullName>Actin-depolymerizing factor 1</fullName>
    </alternativeName>
</protein>
<keyword id="KW-0009">Actin-binding</keyword>
<keyword id="KW-0131">Cell cycle</keyword>
<keyword id="KW-0132">Cell division</keyword>
<keyword id="KW-0963">Cytoplasm</keyword>
<keyword id="KW-0206">Cytoskeleton</keyword>
<keyword id="KW-0539">Nucleus</keyword>